<comment type="function">
    <text evidence="1">An essential GTPase which binds GTP, GDP and possibly (p)ppGpp with moderate affinity, with high nucleotide exchange rates and a fairly low GTP hydrolysis rate. Plays a role in control of the cell cycle, stress response, ribosome biogenesis and in those bacteria that undergo differentiation, in morphogenesis control.</text>
</comment>
<comment type="cofactor">
    <cofactor evidence="1">
        <name>Mg(2+)</name>
        <dbReference type="ChEBI" id="CHEBI:18420"/>
    </cofactor>
</comment>
<comment type="subunit">
    <text evidence="1">Monomer.</text>
</comment>
<comment type="subcellular location">
    <subcellularLocation>
        <location evidence="1">Cytoplasm</location>
    </subcellularLocation>
</comment>
<comment type="similarity">
    <text evidence="1">Belongs to the TRAFAC class OBG-HflX-like GTPase superfamily. OBG GTPase family.</text>
</comment>
<name>OBG_PARL1</name>
<feature type="chain" id="PRO_0000386109" description="GTPase Obg">
    <location>
        <begin position="1"/>
        <end position="348"/>
    </location>
</feature>
<feature type="domain" description="Obg" evidence="2">
    <location>
        <begin position="1"/>
        <end position="159"/>
    </location>
</feature>
<feature type="domain" description="OBG-type G" evidence="1">
    <location>
        <begin position="160"/>
        <end position="327"/>
    </location>
</feature>
<feature type="binding site" evidence="1">
    <location>
        <begin position="166"/>
        <end position="173"/>
    </location>
    <ligand>
        <name>GTP</name>
        <dbReference type="ChEBI" id="CHEBI:37565"/>
    </ligand>
</feature>
<feature type="binding site" evidence="1">
    <location>
        <position position="173"/>
    </location>
    <ligand>
        <name>Mg(2+)</name>
        <dbReference type="ChEBI" id="CHEBI:18420"/>
    </ligand>
</feature>
<feature type="binding site" evidence="1">
    <location>
        <begin position="191"/>
        <end position="195"/>
    </location>
    <ligand>
        <name>GTP</name>
        <dbReference type="ChEBI" id="CHEBI:37565"/>
    </ligand>
</feature>
<feature type="binding site" evidence="1">
    <location>
        <position position="193"/>
    </location>
    <ligand>
        <name>Mg(2+)</name>
        <dbReference type="ChEBI" id="CHEBI:18420"/>
    </ligand>
</feature>
<feature type="binding site" evidence="1">
    <location>
        <begin position="212"/>
        <end position="215"/>
    </location>
    <ligand>
        <name>GTP</name>
        <dbReference type="ChEBI" id="CHEBI:37565"/>
    </ligand>
</feature>
<feature type="binding site" evidence="1">
    <location>
        <begin position="279"/>
        <end position="282"/>
    </location>
    <ligand>
        <name>GTP</name>
        <dbReference type="ChEBI" id="CHEBI:37565"/>
    </ligand>
</feature>
<feature type="binding site" evidence="1">
    <location>
        <begin position="308"/>
        <end position="310"/>
    </location>
    <ligand>
        <name>GTP</name>
        <dbReference type="ChEBI" id="CHEBI:37565"/>
    </ligand>
</feature>
<dbReference type="EC" id="3.6.5.-" evidence="1"/>
<dbReference type="EMBL" id="CP000774">
    <property type="protein sequence ID" value="ABS63100.1"/>
    <property type="molecule type" value="Genomic_DNA"/>
</dbReference>
<dbReference type="RefSeq" id="WP_012110384.1">
    <property type="nucleotide sequence ID" value="NC_009719.1"/>
</dbReference>
<dbReference type="SMR" id="A7HT67"/>
<dbReference type="STRING" id="402881.Plav_1480"/>
<dbReference type="KEGG" id="pla:Plav_1480"/>
<dbReference type="eggNOG" id="COG0536">
    <property type="taxonomic scope" value="Bacteria"/>
</dbReference>
<dbReference type="HOGENOM" id="CLU_011747_2_0_5"/>
<dbReference type="OrthoDB" id="9807318at2"/>
<dbReference type="Proteomes" id="UP000006377">
    <property type="component" value="Chromosome"/>
</dbReference>
<dbReference type="GO" id="GO:0005737">
    <property type="term" value="C:cytoplasm"/>
    <property type="evidence" value="ECO:0007669"/>
    <property type="project" value="UniProtKB-SubCell"/>
</dbReference>
<dbReference type="GO" id="GO:0005525">
    <property type="term" value="F:GTP binding"/>
    <property type="evidence" value="ECO:0007669"/>
    <property type="project" value="UniProtKB-UniRule"/>
</dbReference>
<dbReference type="GO" id="GO:0003924">
    <property type="term" value="F:GTPase activity"/>
    <property type="evidence" value="ECO:0007669"/>
    <property type="project" value="UniProtKB-UniRule"/>
</dbReference>
<dbReference type="GO" id="GO:0000287">
    <property type="term" value="F:magnesium ion binding"/>
    <property type="evidence" value="ECO:0007669"/>
    <property type="project" value="InterPro"/>
</dbReference>
<dbReference type="GO" id="GO:0042254">
    <property type="term" value="P:ribosome biogenesis"/>
    <property type="evidence" value="ECO:0007669"/>
    <property type="project" value="UniProtKB-UniRule"/>
</dbReference>
<dbReference type="CDD" id="cd01898">
    <property type="entry name" value="Obg"/>
    <property type="match status" value="1"/>
</dbReference>
<dbReference type="FunFam" id="2.70.210.12:FF:000001">
    <property type="entry name" value="GTPase Obg"/>
    <property type="match status" value="1"/>
</dbReference>
<dbReference type="Gene3D" id="2.70.210.12">
    <property type="entry name" value="GTP1/OBG domain"/>
    <property type="match status" value="1"/>
</dbReference>
<dbReference type="Gene3D" id="3.40.50.300">
    <property type="entry name" value="P-loop containing nucleotide triphosphate hydrolases"/>
    <property type="match status" value="1"/>
</dbReference>
<dbReference type="HAMAP" id="MF_01454">
    <property type="entry name" value="GTPase_Obg"/>
    <property type="match status" value="1"/>
</dbReference>
<dbReference type="InterPro" id="IPR031167">
    <property type="entry name" value="G_OBG"/>
</dbReference>
<dbReference type="InterPro" id="IPR006073">
    <property type="entry name" value="GTP-bd"/>
</dbReference>
<dbReference type="InterPro" id="IPR014100">
    <property type="entry name" value="GTP-bd_Obg/CgtA"/>
</dbReference>
<dbReference type="InterPro" id="IPR006074">
    <property type="entry name" value="GTP1-OBG_CS"/>
</dbReference>
<dbReference type="InterPro" id="IPR006169">
    <property type="entry name" value="GTP1_OBG_dom"/>
</dbReference>
<dbReference type="InterPro" id="IPR036726">
    <property type="entry name" value="GTP1_OBG_dom_sf"/>
</dbReference>
<dbReference type="InterPro" id="IPR045086">
    <property type="entry name" value="OBG_GTPase"/>
</dbReference>
<dbReference type="InterPro" id="IPR027417">
    <property type="entry name" value="P-loop_NTPase"/>
</dbReference>
<dbReference type="NCBIfam" id="TIGR02729">
    <property type="entry name" value="Obg_CgtA"/>
    <property type="match status" value="1"/>
</dbReference>
<dbReference type="NCBIfam" id="NF008955">
    <property type="entry name" value="PRK12297.1"/>
    <property type="match status" value="1"/>
</dbReference>
<dbReference type="NCBIfam" id="NF008956">
    <property type="entry name" value="PRK12299.1"/>
    <property type="match status" value="1"/>
</dbReference>
<dbReference type="PANTHER" id="PTHR11702">
    <property type="entry name" value="DEVELOPMENTALLY REGULATED GTP-BINDING PROTEIN-RELATED"/>
    <property type="match status" value="1"/>
</dbReference>
<dbReference type="PANTHER" id="PTHR11702:SF31">
    <property type="entry name" value="MITOCHONDRIAL RIBOSOME-ASSOCIATED GTPASE 2"/>
    <property type="match status" value="1"/>
</dbReference>
<dbReference type="Pfam" id="PF01018">
    <property type="entry name" value="GTP1_OBG"/>
    <property type="match status" value="1"/>
</dbReference>
<dbReference type="Pfam" id="PF01926">
    <property type="entry name" value="MMR_HSR1"/>
    <property type="match status" value="1"/>
</dbReference>
<dbReference type="PIRSF" id="PIRSF002401">
    <property type="entry name" value="GTP_bd_Obg/CgtA"/>
    <property type="match status" value="1"/>
</dbReference>
<dbReference type="PRINTS" id="PR00326">
    <property type="entry name" value="GTP1OBG"/>
</dbReference>
<dbReference type="SUPFAM" id="SSF82051">
    <property type="entry name" value="Obg GTP-binding protein N-terminal domain"/>
    <property type="match status" value="1"/>
</dbReference>
<dbReference type="SUPFAM" id="SSF52540">
    <property type="entry name" value="P-loop containing nucleoside triphosphate hydrolases"/>
    <property type="match status" value="1"/>
</dbReference>
<dbReference type="PROSITE" id="PS51710">
    <property type="entry name" value="G_OBG"/>
    <property type="match status" value="1"/>
</dbReference>
<dbReference type="PROSITE" id="PS00905">
    <property type="entry name" value="GTP1_OBG"/>
    <property type="match status" value="1"/>
</dbReference>
<dbReference type="PROSITE" id="PS51883">
    <property type="entry name" value="OBG"/>
    <property type="match status" value="1"/>
</dbReference>
<gene>
    <name evidence="1" type="primary">obg</name>
    <name type="ordered locus">Plav_1480</name>
</gene>
<accession>A7HT67</accession>
<organism>
    <name type="scientific">Parvibaculum lavamentivorans (strain DS-1 / DSM 13023 / NCIMB 13966)</name>
    <dbReference type="NCBI Taxonomy" id="402881"/>
    <lineage>
        <taxon>Bacteria</taxon>
        <taxon>Pseudomonadati</taxon>
        <taxon>Pseudomonadota</taxon>
        <taxon>Alphaproteobacteria</taxon>
        <taxon>Hyphomicrobiales</taxon>
        <taxon>Parvibaculaceae</taxon>
        <taxon>Parvibaculum</taxon>
    </lineage>
</organism>
<reference key="1">
    <citation type="journal article" date="2011" name="Stand. Genomic Sci.">
        <title>Complete genome sequence of Parvibaculum lavamentivorans type strain (DS-1(T)).</title>
        <authorList>
            <person name="Schleheck D."/>
            <person name="Weiss M."/>
            <person name="Pitluck S."/>
            <person name="Bruce D."/>
            <person name="Land M.L."/>
            <person name="Han S."/>
            <person name="Saunders E."/>
            <person name="Tapia R."/>
            <person name="Detter C."/>
            <person name="Brettin T."/>
            <person name="Han J."/>
            <person name="Woyke T."/>
            <person name="Goodwin L."/>
            <person name="Pennacchio L."/>
            <person name="Nolan M."/>
            <person name="Cook A.M."/>
            <person name="Kjelleberg S."/>
            <person name="Thomas T."/>
        </authorList>
    </citation>
    <scope>NUCLEOTIDE SEQUENCE [LARGE SCALE GENOMIC DNA]</scope>
    <source>
        <strain>DS-1 / DSM 13023 / NCIMB 13966</strain>
    </source>
</reference>
<protein>
    <recommendedName>
        <fullName evidence="1">GTPase Obg</fullName>
        <ecNumber evidence="1">3.6.5.-</ecNumber>
    </recommendedName>
    <alternativeName>
        <fullName evidence="1">GTP-binding protein Obg</fullName>
    </alternativeName>
</protein>
<keyword id="KW-0963">Cytoplasm</keyword>
<keyword id="KW-0342">GTP-binding</keyword>
<keyword id="KW-0378">Hydrolase</keyword>
<keyword id="KW-0460">Magnesium</keyword>
<keyword id="KW-0479">Metal-binding</keyword>
<keyword id="KW-0547">Nucleotide-binding</keyword>
<keyword id="KW-1185">Reference proteome</keyword>
<proteinExistence type="inferred from homology"/>
<sequence>MKFLDQAKIYVRSGNGGAGCVSFRREKFIEFGGPDGGDGGRGGDVIVECVEGLNTLIDYRFQQHFRAKTGTHGMGKNRAGANGADVVLKVPVGTQIFEEDEETLIADMTEVGQRIVLLKGGNGGFGNAYFKSSTNQAPRRANPGLEGQEKTIILRLKLIADAGLVGLPNAGKSTFLAAVSAAKPKIADYPFTTLTPGLGVVTIDTRSFVLADIPGLIEGAHEGAGLGDRFLGHLERCSILIHLVDGTAEDVAEAYHIIRGEIEAYGAGLEDKPEILCLNKMDALSEEEREEKLALLAEESGSEVRLLSGVSGEGVKEVLRLAADEIWKTRAMEKAEAATGEEEEGWKP</sequence>
<evidence type="ECO:0000255" key="1">
    <source>
        <dbReference type="HAMAP-Rule" id="MF_01454"/>
    </source>
</evidence>
<evidence type="ECO:0000255" key="2">
    <source>
        <dbReference type="PROSITE-ProRule" id="PRU01231"/>
    </source>
</evidence>